<keyword id="KW-0963">Cytoplasm</keyword>
<keyword id="KW-0413">Isomerase</keyword>
<keyword id="KW-0627">Porphyrin biosynthesis</keyword>
<keyword id="KW-0663">Pyridoxal phosphate</keyword>
<evidence type="ECO:0000255" key="1">
    <source>
        <dbReference type="HAMAP-Rule" id="MF_00375"/>
    </source>
</evidence>
<protein>
    <recommendedName>
        <fullName evidence="1">Glutamate-1-semialdehyde 2,1-aminomutase</fullName>
        <shortName evidence="1">GSA</shortName>
        <ecNumber evidence="1">5.4.3.8</ecNumber>
    </recommendedName>
    <alternativeName>
        <fullName evidence="1">Glutamate-1-semialdehyde aminotransferase</fullName>
        <shortName evidence="1">GSA-AT</shortName>
    </alternativeName>
</protein>
<name>GSA_SOLUE</name>
<feature type="chain" id="PRO_0000382369" description="Glutamate-1-semialdehyde 2,1-aminomutase">
    <location>
        <begin position="1"/>
        <end position="417"/>
    </location>
</feature>
<feature type="modified residue" description="N6-(pyridoxal phosphate)lysine" evidence="1">
    <location>
        <position position="267"/>
    </location>
</feature>
<accession>Q01YQ2</accession>
<reference key="1">
    <citation type="journal article" date="2009" name="Appl. Environ. Microbiol.">
        <title>Three genomes from the phylum Acidobacteria provide insight into the lifestyles of these microorganisms in soils.</title>
        <authorList>
            <person name="Ward N.L."/>
            <person name="Challacombe J.F."/>
            <person name="Janssen P.H."/>
            <person name="Henrissat B."/>
            <person name="Coutinho P.M."/>
            <person name="Wu M."/>
            <person name="Xie G."/>
            <person name="Haft D.H."/>
            <person name="Sait M."/>
            <person name="Badger J."/>
            <person name="Barabote R.D."/>
            <person name="Bradley B."/>
            <person name="Brettin T.S."/>
            <person name="Brinkac L.M."/>
            <person name="Bruce D."/>
            <person name="Creasy T."/>
            <person name="Daugherty S.C."/>
            <person name="Davidsen T.M."/>
            <person name="DeBoy R.T."/>
            <person name="Detter J.C."/>
            <person name="Dodson R.J."/>
            <person name="Durkin A.S."/>
            <person name="Ganapathy A."/>
            <person name="Gwinn-Giglio M."/>
            <person name="Han C.S."/>
            <person name="Khouri H."/>
            <person name="Kiss H."/>
            <person name="Kothari S.P."/>
            <person name="Madupu R."/>
            <person name="Nelson K.E."/>
            <person name="Nelson W.C."/>
            <person name="Paulsen I."/>
            <person name="Penn K."/>
            <person name="Ren Q."/>
            <person name="Rosovitz M.J."/>
            <person name="Selengut J.D."/>
            <person name="Shrivastava S."/>
            <person name="Sullivan S.A."/>
            <person name="Tapia R."/>
            <person name="Thompson L.S."/>
            <person name="Watkins K.L."/>
            <person name="Yang Q."/>
            <person name="Yu C."/>
            <person name="Zafar N."/>
            <person name="Zhou L."/>
            <person name="Kuske C.R."/>
        </authorList>
    </citation>
    <scope>NUCLEOTIDE SEQUENCE [LARGE SCALE GENOMIC DNA]</scope>
    <source>
        <strain>Ellin6076</strain>
    </source>
</reference>
<organism>
    <name type="scientific">Solibacter usitatus (strain Ellin6076)</name>
    <dbReference type="NCBI Taxonomy" id="234267"/>
    <lineage>
        <taxon>Bacteria</taxon>
        <taxon>Pseudomonadati</taxon>
        <taxon>Acidobacteriota</taxon>
        <taxon>Terriglobia</taxon>
        <taxon>Bryobacterales</taxon>
        <taxon>Solibacteraceae</taxon>
        <taxon>Candidatus Solibacter</taxon>
    </lineage>
</organism>
<gene>
    <name evidence="1" type="primary">hemL</name>
    <name type="ordered locus">Acid_4251</name>
</gene>
<sequence length="417" mass="44347">MTHTKSEELFRRAVEKIPGGVNSPVRAFRSVGGQPVFIARGQGSHLFDVDGNEYIDYVGSWGPLILGHRHPEILAALERALEIGTSFGAPTEQEIDLADAIIDAVPSVEMVRLVNSGTEATMSAIRVARGFTGRDLVVKFEGCYHGHVDSLLVKAGSGMATLGIADTQGVPKAFADTTIPLPYNSLDALEEAFRAHGDRIAAVIVEPVVGNMGCVPPLPGYLEGMRAITERYGALLIFDEVMTGFRVAFGGAQQLYGIKPDLTTLGKVIGGGLPVGAYGGRKDIMSKVAPAGPIYQAGTLSGNPLAVAAGLAMLRHLKRNPQVYTRLEECGARLAAAAPKGVTVNRVGSMFTFFFTDGPVTDWESAKRCDTSRFGEFFRGMLDRGVYLAPSQFEAAFVGAAHSDEDIAKTIEAAKTA</sequence>
<proteinExistence type="inferred from homology"/>
<dbReference type="EC" id="5.4.3.8" evidence="1"/>
<dbReference type="EMBL" id="CP000473">
    <property type="protein sequence ID" value="ABJ85213.1"/>
    <property type="molecule type" value="Genomic_DNA"/>
</dbReference>
<dbReference type="SMR" id="Q01YQ2"/>
<dbReference type="FunCoup" id="Q01YQ2">
    <property type="interactions" value="611"/>
</dbReference>
<dbReference type="STRING" id="234267.Acid_4251"/>
<dbReference type="KEGG" id="sus:Acid_4251"/>
<dbReference type="eggNOG" id="COG0001">
    <property type="taxonomic scope" value="Bacteria"/>
</dbReference>
<dbReference type="HOGENOM" id="CLU_016922_1_5_0"/>
<dbReference type="InParanoid" id="Q01YQ2"/>
<dbReference type="OrthoDB" id="9807885at2"/>
<dbReference type="UniPathway" id="UPA00251">
    <property type="reaction ID" value="UER00317"/>
</dbReference>
<dbReference type="GO" id="GO:0005737">
    <property type="term" value="C:cytoplasm"/>
    <property type="evidence" value="ECO:0007669"/>
    <property type="project" value="UniProtKB-SubCell"/>
</dbReference>
<dbReference type="GO" id="GO:0042286">
    <property type="term" value="F:glutamate-1-semialdehyde 2,1-aminomutase activity"/>
    <property type="evidence" value="ECO:0007669"/>
    <property type="project" value="UniProtKB-UniRule"/>
</dbReference>
<dbReference type="GO" id="GO:0030170">
    <property type="term" value="F:pyridoxal phosphate binding"/>
    <property type="evidence" value="ECO:0007669"/>
    <property type="project" value="InterPro"/>
</dbReference>
<dbReference type="GO" id="GO:0008483">
    <property type="term" value="F:transaminase activity"/>
    <property type="evidence" value="ECO:0007669"/>
    <property type="project" value="InterPro"/>
</dbReference>
<dbReference type="GO" id="GO:0006782">
    <property type="term" value="P:protoporphyrinogen IX biosynthetic process"/>
    <property type="evidence" value="ECO:0007669"/>
    <property type="project" value="UniProtKB-UniRule"/>
</dbReference>
<dbReference type="CDD" id="cd00610">
    <property type="entry name" value="OAT_like"/>
    <property type="match status" value="1"/>
</dbReference>
<dbReference type="FunFam" id="3.40.640.10:FF:000021">
    <property type="entry name" value="Glutamate-1-semialdehyde 2,1-aminomutase"/>
    <property type="match status" value="1"/>
</dbReference>
<dbReference type="Gene3D" id="3.90.1150.10">
    <property type="entry name" value="Aspartate Aminotransferase, domain 1"/>
    <property type="match status" value="1"/>
</dbReference>
<dbReference type="Gene3D" id="3.40.640.10">
    <property type="entry name" value="Type I PLP-dependent aspartate aminotransferase-like (Major domain)"/>
    <property type="match status" value="1"/>
</dbReference>
<dbReference type="HAMAP" id="MF_00375">
    <property type="entry name" value="HemL_aminotrans_3"/>
    <property type="match status" value="1"/>
</dbReference>
<dbReference type="InterPro" id="IPR004639">
    <property type="entry name" value="4pyrrol_synth_GluAld_NH2Trfase"/>
</dbReference>
<dbReference type="InterPro" id="IPR005814">
    <property type="entry name" value="Aminotrans_3"/>
</dbReference>
<dbReference type="InterPro" id="IPR049704">
    <property type="entry name" value="Aminotrans_3_PPA_site"/>
</dbReference>
<dbReference type="InterPro" id="IPR015424">
    <property type="entry name" value="PyrdxlP-dep_Trfase"/>
</dbReference>
<dbReference type="InterPro" id="IPR015421">
    <property type="entry name" value="PyrdxlP-dep_Trfase_major"/>
</dbReference>
<dbReference type="InterPro" id="IPR015422">
    <property type="entry name" value="PyrdxlP-dep_Trfase_small"/>
</dbReference>
<dbReference type="NCBIfam" id="TIGR00713">
    <property type="entry name" value="hemL"/>
    <property type="match status" value="1"/>
</dbReference>
<dbReference type="NCBIfam" id="NF000818">
    <property type="entry name" value="PRK00062.1"/>
    <property type="match status" value="1"/>
</dbReference>
<dbReference type="PANTHER" id="PTHR43713">
    <property type="entry name" value="GLUTAMATE-1-SEMIALDEHYDE 2,1-AMINOMUTASE"/>
    <property type="match status" value="1"/>
</dbReference>
<dbReference type="PANTHER" id="PTHR43713:SF3">
    <property type="entry name" value="GLUTAMATE-1-SEMIALDEHYDE 2,1-AMINOMUTASE 1, CHLOROPLASTIC-RELATED"/>
    <property type="match status" value="1"/>
</dbReference>
<dbReference type="Pfam" id="PF00202">
    <property type="entry name" value="Aminotran_3"/>
    <property type="match status" value="1"/>
</dbReference>
<dbReference type="SUPFAM" id="SSF53383">
    <property type="entry name" value="PLP-dependent transferases"/>
    <property type="match status" value="1"/>
</dbReference>
<dbReference type="PROSITE" id="PS00600">
    <property type="entry name" value="AA_TRANSFER_CLASS_3"/>
    <property type="match status" value="1"/>
</dbReference>
<comment type="catalytic activity">
    <reaction evidence="1">
        <text>(S)-4-amino-5-oxopentanoate = 5-aminolevulinate</text>
        <dbReference type="Rhea" id="RHEA:14265"/>
        <dbReference type="ChEBI" id="CHEBI:57501"/>
        <dbReference type="ChEBI" id="CHEBI:356416"/>
        <dbReference type="EC" id="5.4.3.8"/>
    </reaction>
</comment>
<comment type="cofactor">
    <cofactor evidence="1">
        <name>pyridoxal 5'-phosphate</name>
        <dbReference type="ChEBI" id="CHEBI:597326"/>
    </cofactor>
</comment>
<comment type="pathway">
    <text evidence="1">Porphyrin-containing compound metabolism; protoporphyrin-IX biosynthesis; 5-aminolevulinate from L-glutamyl-tRNA(Glu): step 2/2.</text>
</comment>
<comment type="subunit">
    <text evidence="1">Homodimer.</text>
</comment>
<comment type="subcellular location">
    <subcellularLocation>
        <location evidence="1">Cytoplasm</location>
    </subcellularLocation>
</comment>
<comment type="similarity">
    <text evidence="1">Belongs to the class-III pyridoxal-phosphate-dependent aminotransferase family. HemL subfamily.</text>
</comment>